<name>GATB_TREPA</name>
<keyword id="KW-0067">ATP-binding</keyword>
<keyword id="KW-0436">Ligase</keyword>
<keyword id="KW-0547">Nucleotide-binding</keyword>
<keyword id="KW-0648">Protein biosynthesis</keyword>
<keyword id="KW-1185">Reference proteome</keyword>
<comment type="function">
    <text evidence="1">Allows the formation of correctly charged Asn-tRNA(Asn) or Gln-tRNA(Gln) through the transamidation of misacylated Asp-tRNA(Asn) or Glu-tRNA(Gln) in organisms which lack either or both of asparaginyl-tRNA or glutaminyl-tRNA synthetases. The reaction takes place in the presence of glutamine and ATP through an activated phospho-Asp-tRNA(Asn) or phospho-Glu-tRNA(Gln) (By similarity).</text>
</comment>
<comment type="catalytic activity">
    <reaction>
        <text>L-glutamyl-tRNA(Gln) + L-glutamine + ATP + H2O = L-glutaminyl-tRNA(Gln) + L-glutamate + ADP + phosphate + H(+)</text>
        <dbReference type="Rhea" id="RHEA:17521"/>
        <dbReference type="Rhea" id="RHEA-COMP:9681"/>
        <dbReference type="Rhea" id="RHEA-COMP:9684"/>
        <dbReference type="ChEBI" id="CHEBI:15377"/>
        <dbReference type="ChEBI" id="CHEBI:15378"/>
        <dbReference type="ChEBI" id="CHEBI:29985"/>
        <dbReference type="ChEBI" id="CHEBI:30616"/>
        <dbReference type="ChEBI" id="CHEBI:43474"/>
        <dbReference type="ChEBI" id="CHEBI:58359"/>
        <dbReference type="ChEBI" id="CHEBI:78520"/>
        <dbReference type="ChEBI" id="CHEBI:78521"/>
        <dbReference type="ChEBI" id="CHEBI:456216"/>
    </reaction>
</comment>
<comment type="catalytic activity">
    <reaction>
        <text>L-aspartyl-tRNA(Asn) + L-glutamine + ATP + H2O = L-asparaginyl-tRNA(Asn) + L-glutamate + ADP + phosphate + 2 H(+)</text>
        <dbReference type="Rhea" id="RHEA:14513"/>
        <dbReference type="Rhea" id="RHEA-COMP:9674"/>
        <dbReference type="Rhea" id="RHEA-COMP:9677"/>
        <dbReference type="ChEBI" id="CHEBI:15377"/>
        <dbReference type="ChEBI" id="CHEBI:15378"/>
        <dbReference type="ChEBI" id="CHEBI:29985"/>
        <dbReference type="ChEBI" id="CHEBI:30616"/>
        <dbReference type="ChEBI" id="CHEBI:43474"/>
        <dbReference type="ChEBI" id="CHEBI:58359"/>
        <dbReference type="ChEBI" id="CHEBI:78515"/>
        <dbReference type="ChEBI" id="CHEBI:78516"/>
        <dbReference type="ChEBI" id="CHEBI:456216"/>
    </reaction>
</comment>
<comment type="subunit">
    <text evidence="1">Heterotrimer of A, B and C subunits.</text>
</comment>
<comment type="similarity">
    <text evidence="2">Belongs to the GatB/GatE family. GatB subfamily.</text>
</comment>
<dbReference type="EC" id="6.3.5.-"/>
<dbReference type="EMBL" id="AE000520">
    <property type="protein sequence ID" value="AAC65971.1"/>
    <property type="molecule type" value="Genomic_DNA"/>
</dbReference>
<dbReference type="PIR" id="A71254">
    <property type="entry name" value="A71254"/>
</dbReference>
<dbReference type="RefSeq" id="WP_010882465.1">
    <property type="nucleotide sequence ID" value="NC_021490.2"/>
</dbReference>
<dbReference type="SMR" id="O83984"/>
<dbReference type="STRING" id="243276.TP_1021"/>
<dbReference type="EnsemblBacteria" id="AAC65971">
    <property type="protein sequence ID" value="AAC65971"/>
    <property type="gene ID" value="TP_1021"/>
</dbReference>
<dbReference type="GeneID" id="93876768"/>
<dbReference type="KEGG" id="tpa:TP_1021"/>
<dbReference type="KEGG" id="tpw:TPANIC_1021"/>
<dbReference type="eggNOG" id="COG0064">
    <property type="taxonomic scope" value="Bacteria"/>
</dbReference>
<dbReference type="HOGENOM" id="CLU_019240_0_0_12"/>
<dbReference type="OrthoDB" id="9804078at2"/>
<dbReference type="Proteomes" id="UP000000811">
    <property type="component" value="Chromosome"/>
</dbReference>
<dbReference type="GO" id="GO:0050566">
    <property type="term" value="F:asparaginyl-tRNA synthase (glutamine-hydrolyzing) activity"/>
    <property type="evidence" value="ECO:0007669"/>
    <property type="project" value="RHEA"/>
</dbReference>
<dbReference type="GO" id="GO:0005524">
    <property type="term" value="F:ATP binding"/>
    <property type="evidence" value="ECO:0007669"/>
    <property type="project" value="UniProtKB-KW"/>
</dbReference>
<dbReference type="GO" id="GO:0050567">
    <property type="term" value="F:glutaminyl-tRNA synthase (glutamine-hydrolyzing) activity"/>
    <property type="evidence" value="ECO:0007669"/>
    <property type="project" value="UniProtKB-UniRule"/>
</dbReference>
<dbReference type="GO" id="GO:0070681">
    <property type="term" value="P:glutaminyl-tRNAGln biosynthesis via transamidation"/>
    <property type="evidence" value="ECO:0007669"/>
    <property type="project" value="TreeGrafter"/>
</dbReference>
<dbReference type="GO" id="GO:0006412">
    <property type="term" value="P:translation"/>
    <property type="evidence" value="ECO:0007669"/>
    <property type="project" value="UniProtKB-UniRule"/>
</dbReference>
<dbReference type="FunFam" id="1.10.10.410:FF:000001">
    <property type="entry name" value="Aspartyl/glutamyl-tRNA(Asn/Gln) amidotransferase subunit B"/>
    <property type="match status" value="1"/>
</dbReference>
<dbReference type="Gene3D" id="1.10.10.410">
    <property type="match status" value="1"/>
</dbReference>
<dbReference type="Gene3D" id="1.10.150.380">
    <property type="entry name" value="GatB domain, N-terminal subdomain"/>
    <property type="match status" value="1"/>
</dbReference>
<dbReference type="HAMAP" id="MF_00121">
    <property type="entry name" value="GatB"/>
    <property type="match status" value="1"/>
</dbReference>
<dbReference type="InterPro" id="IPR017959">
    <property type="entry name" value="Asn/Gln-tRNA_amidoTrfase_suB/E"/>
</dbReference>
<dbReference type="InterPro" id="IPR006075">
    <property type="entry name" value="Asn/Gln-tRNA_Trfase_suB/E_cat"/>
</dbReference>
<dbReference type="InterPro" id="IPR018027">
    <property type="entry name" value="Asn/Gln_amidotransferase"/>
</dbReference>
<dbReference type="InterPro" id="IPR003789">
    <property type="entry name" value="Asn/Gln_tRNA_amidoTrase-B-like"/>
</dbReference>
<dbReference type="InterPro" id="IPR004413">
    <property type="entry name" value="GatB"/>
</dbReference>
<dbReference type="InterPro" id="IPR042114">
    <property type="entry name" value="GatB_C_1"/>
</dbReference>
<dbReference type="InterPro" id="IPR023168">
    <property type="entry name" value="GatB_Yqey_C_2"/>
</dbReference>
<dbReference type="InterPro" id="IPR017958">
    <property type="entry name" value="Gln-tRNA_amidoTrfase_suB_CS"/>
</dbReference>
<dbReference type="InterPro" id="IPR014746">
    <property type="entry name" value="Gln_synth/guanido_kin_cat_dom"/>
</dbReference>
<dbReference type="NCBIfam" id="TIGR00133">
    <property type="entry name" value="gatB"/>
    <property type="match status" value="1"/>
</dbReference>
<dbReference type="NCBIfam" id="NF004012">
    <property type="entry name" value="PRK05477.1-2"/>
    <property type="match status" value="1"/>
</dbReference>
<dbReference type="NCBIfam" id="NF004014">
    <property type="entry name" value="PRK05477.1-4"/>
    <property type="match status" value="1"/>
</dbReference>
<dbReference type="PANTHER" id="PTHR11659">
    <property type="entry name" value="GLUTAMYL-TRNA GLN AMIDOTRANSFERASE SUBUNIT B MITOCHONDRIAL AND PROKARYOTIC PET112-RELATED"/>
    <property type="match status" value="1"/>
</dbReference>
<dbReference type="PANTHER" id="PTHR11659:SF0">
    <property type="entry name" value="GLUTAMYL-TRNA(GLN) AMIDOTRANSFERASE SUBUNIT B, MITOCHONDRIAL"/>
    <property type="match status" value="1"/>
</dbReference>
<dbReference type="Pfam" id="PF02934">
    <property type="entry name" value="GatB_N"/>
    <property type="match status" value="1"/>
</dbReference>
<dbReference type="Pfam" id="PF02637">
    <property type="entry name" value="GatB_Yqey"/>
    <property type="match status" value="1"/>
</dbReference>
<dbReference type="SMART" id="SM00845">
    <property type="entry name" value="GatB_Yqey"/>
    <property type="match status" value="1"/>
</dbReference>
<dbReference type="SUPFAM" id="SSF89095">
    <property type="entry name" value="GatB/YqeY motif"/>
    <property type="match status" value="1"/>
</dbReference>
<dbReference type="SUPFAM" id="SSF55931">
    <property type="entry name" value="Glutamine synthetase/guanido kinase"/>
    <property type="match status" value="1"/>
</dbReference>
<dbReference type="PROSITE" id="PS01234">
    <property type="entry name" value="GATB"/>
    <property type="match status" value="1"/>
</dbReference>
<gene>
    <name type="primary">gatB</name>
    <name type="ordered locus">TP_1021</name>
</gene>
<protein>
    <recommendedName>
        <fullName>Aspartyl/glutamyl-tRNA(Asn/Gln) amidotransferase subunit B</fullName>
        <shortName>Asp/Glu-ADT subunit B</shortName>
        <ecNumber>6.3.5.-</ecNumber>
    </recommendedName>
</protein>
<accession>O83984</accession>
<feature type="chain" id="PRO_0000148861" description="Aspartyl/glutamyl-tRNA(Asn/Gln) amidotransferase subunit B">
    <location>
        <begin position="1"/>
        <end position="509"/>
    </location>
</feature>
<evidence type="ECO:0000250" key="1"/>
<evidence type="ECO:0000305" key="2"/>
<organism>
    <name type="scientific">Treponema pallidum (strain Nichols)</name>
    <dbReference type="NCBI Taxonomy" id="243276"/>
    <lineage>
        <taxon>Bacteria</taxon>
        <taxon>Pseudomonadati</taxon>
        <taxon>Spirochaetota</taxon>
        <taxon>Spirochaetia</taxon>
        <taxon>Spirochaetales</taxon>
        <taxon>Treponemataceae</taxon>
        <taxon>Treponema</taxon>
    </lineage>
</organism>
<proteinExistence type="inferred from homology"/>
<sequence length="509" mass="56865">MSDLQTGTVPSIAGATDDTHAAPFFYEVIIGCEIHCQLLTKTKAFCACANRSGGMPNSRVCPVCLGLPGALPVVSEEYVRLGVRAGLALGCTIQLWSAFDRKHYFYPDLPKGYQITQYDAPLCTDGAVDVQGVDMPVQRRVRIERIHLEEDAGKSLHAADAYSYIDFNRCGVPLIEIVSRPDLRSAEEAACFMQTIREILTFIEVTDGNLEEGALRCDANVNVRILYKGQEHHTPISEIKNMNSYRMVRDACTYEVQRQLQEFWQKGPASKEEMQRKRTMGWDPVEGVTLLQRTKHSLRDYRFMRDPDLPDLHLTPAYVQHLSYTVGELPAARRARFKLDLGLSAFAAQTLTGSRMLADWFEKAAHASKNARRVANWILSEVLAVVNEKNICIAELNLSPEAIAELMDAVEDQRITGKQAKDIFAQMLATGARAQDIISAQGLAQLSDEEEIATLVQTVFQEHPKALRDWQHGKTNVAAWLMGQVMKRSRGRAHPARVATLVHQALSQL</sequence>
<reference key="1">
    <citation type="journal article" date="1998" name="Science">
        <title>Complete genome sequence of Treponema pallidum, the syphilis spirochete.</title>
        <authorList>
            <person name="Fraser C.M."/>
            <person name="Norris S.J."/>
            <person name="Weinstock G.M."/>
            <person name="White O."/>
            <person name="Sutton G.G."/>
            <person name="Dodson R.J."/>
            <person name="Gwinn M.L."/>
            <person name="Hickey E.K."/>
            <person name="Clayton R.A."/>
            <person name="Ketchum K.A."/>
            <person name="Sodergren E."/>
            <person name="Hardham J.M."/>
            <person name="McLeod M.P."/>
            <person name="Salzberg S.L."/>
            <person name="Peterson J.D."/>
            <person name="Khalak H.G."/>
            <person name="Richardson D.L."/>
            <person name="Howell J.K."/>
            <person name="Chidambaram M."/>
            <person name="Utterback T.R."/>
            <person name="McDonald L.A."/>
            <person name="Artiach P."/>
            <person name="Bowman C."/>
            <person name="Cotton M.D."/>
            <person name="Fujii C."/>
            <person name="Garland S.A."/>
            <person name="Hatch B."/>
            <person name="Horst K."/>
            <person name="Roberts K.M."/>
            <person name="Sandusky M."/>
            <person name="Weidman J.F."/>
            <person name="Smith H.O."/>
            <person name="Venter J.C."/>
        </authorList>
    </citation>
    <scope>NUCLEOTIDE SEQUENCE [LARGE SCALE GENOMIC DNA]</scope>
    <source>
        <strain>Nichols</strain>
    </source>
</reference>